<name>RCF1_NEUCR</name>
<dbReference type="EMBL" id="CM002242">
    <property type="protein sequence ID" value="EAA30270.3"/>
    <property type="status" value="ALT_INIT"/>
    <property type="molecule type" value="Genomic_DNA"/>
</dbReference>
<dbReference type="RefSeq" id="XP_959506.3">
    <property type="nucleotide sequence ID" value="XM_954413.3"/>
</dbReference>
<dbReference type="FunCoup" id="Q7S455">
    <property type="interactions" value="69"/>
</dbReference>
<dbReference type="STRING" id="367110.Q7S455"/>
<dbReference type="PaxDb" id="5141-EFNCRP00000008507"/>
<dbReference type="EnsemblFungi" id="EAA30270">
    <property type="protein sequence ID" value="EAA30270"/>
    <property type="gene ID" value="NCU02451"/>
</dbReference>
<dbReference type="GeneID" id="3875653"/>
<dbReference type="KEGG" id="ncr:NCU02451"/>
<dbReference type="HOGENOM" id="CLU_087356_0_1_1"/>
<dbReference type="InParanoid" id="Q7S455"/>
<dbReference type="OMA" id="QRWIREL"/>
<dbReference type="OrthoDB" id="6604018at2759"/>
<dbReference type="Proteomes" id="UP000001805">
    <property type="component" value="Chromosome 7, Linkage Group VII"/>
</dbReference>
<dbReference type="GO" id="GO:0031966">
    <property type="term" value="C:mitochondrial membrane"/>
    <property type="evidence" value="ECO:0007669"/>
    <property type="project" value="UniProtKB-SubCell"/>
</dbReference>
<dbReference type="GO" id="GO:0005739">
    <property type="term" value="C:mitochondrion"/>
    <property type="evidence" value="ECO:0000318"/>
    <property type="project" value="GO_Central"/>
</dbReference>
<dbReference type="GO" id="GO:0097250">
    <property type="term" value="P:mitochondrial respirasome assembly"/>
    <property type="evidence" value="ECO:0000318"/>
    <property type="project" value="GO_Central"/>
</dbReference>
<dbReference type="Gene3D" id="6.10.140.1320">
    <property type="match status" value="1"/>
</dbReference>
<dbReference type="InterPro" id="IPR007667">
    <property type="entry name" value="Hypoxia_induced_domain"/>
</dbReference>
<dbReference type="InterPro" id="IPR050355">
    <property type="entry name" value="RCF1"/>
</dbReference>
<dbReference type="PANTHER" id="PTHR12297:SF3">
    <property type="entry name" value="HIG1 DOMAIN FAMILY MEMBER 1A"/>
    <property type="match status" value="1"/>
</dbReference>
<dbReference type="PANTHER" id="PTHR12297">
    <property type="entry name" value="HYPOXIA-INDUCBILE GENE 1 HIG1 -RELATED"/>
    <property type="match status" value="1"/>
</dbReference>
<dbReference type="Pfam" id="PF04588">
    <property type="entry name" value="HIG_1_N"/>
    <property type="match status" value="1"/>
</dbReference>
<dbReference type="PROSITE" id="PS51503">
    <property type="entry name" value="HIG1"/>
    <property type="match status" value="1"/>
</dbReference>
<comment type="function">
    <text evidence="1">Cytochrome c oxidase subunit which plays a role in assembly of respiratory supercomplexes.</text>
</comment>
<comment type="subunit">
    <text evidence="1">Associates with the respiratory chain complex III/complex IV supercomplex.</text>
</comment>
<comment type="subcellular location">
    <subcellularLocation>
        <location evidence="3">Mitochondrion membrane</location>
        <topology evidence="3">Multi-pass membrane protein</topology>
    </subcellularLocation>
</comment>
<comment type="similarity">
    <text evidence="5">Belongs to the RCF1 family.</text>
</comment>
<comment type="sequence caution" evidence="5">
    <conflict type="erroneous initiation">
        <sequence resource="EMBL-CDS" id="EAA30270"/>
    </conflict>
    <text>Extended N-terminus.</text>
</comment>
<evidence type="ECO:0000250" key="1"/>
<evidence type="ECO:0000255" key="2"/>
<evidence type="ECO:0000255" key="3">
    <source>
        <dbReference type="PROSITE-ProRule" id="PRU00836"/>
    </source>
</evidence>
<evidence type="ECO:0000256" key="4">
    <source>
        <dbReference type="SAM" id="MobiDB-lite"/>
    </source>
</evidence>
<evidence type="ECO:0000305" key="5"/>
<organism>
    <name type="scientific">Neurospora crassa (strain ATCC 24698 / 74-OR23-1A / CBS 708.71 / DSM 1257 / FGSC 987)</name>
    <dbReference type="NCBI Taxonomy" id="367110"/>
    <lineage>
        <taxon>Eukaryota</taxon>
        <taxon>Fungi</taxon>
        <taxon>Dikarya</taxon>
        <taxon>Ascomycota</taxon>
        <taxon>Pezizomycotina</taxon>
        <taxon>Sordariomycetes</taxon>
        <taxon>Sordariomycetidae</taxon>
        <taxon>Sordariales</taxon>
        <taxon>Sordariaceae</taxon>
        <taxon>Neurospora</taxon>
    </lineage>
</organism>
<reference key="1">
    <citation type="journal article" date="2003" name="Nature">
        <title>The genome sequence of the filamentous fungus Neurospora crassa.</title>
        <authorList>
            <person name="Galagan J.E."/>
            <person name="Calvo S.E."/>
            <person name="Borkovich K.A."/>
            <person name="Selker E.U."/>
            <person name="Read N.D."/>
            <person name="Jaffe D.B."/>
            <person name="FitzHugh W."/>
            <person name="Ma L.-J."/>
            <person name="Smirnov S."/>
            <person name="Purcell S."/>
            <person name="Rehman B."/>
            <person name="Elkins T."/>
            <person name="Engels R."/>
            <person name="Wang S."/>
            <person name="Nielsen C.B."/>
            <person name="Butler J."/>
            <person name="Endrizzi M."/>
            <person name="Qui D."/>
            <person name="Ianakiev P."/>
            <person name="Bell-Pedersen D."/>
            <person name="Nelson M.A."/>
            <person name="Werner-Washburne M."/>
            <person name="Selitrennikoff C.P."/>
            <person name="Kinsey J.A."/>
            <person name="Braun E.L."/>
            <person name="Zelter A."/>
            <person name="Schulte U."/>
            <person name="Kothe G.O."/>
            <person name="Jedd G."/>
            <person name="Mewes H.-W."/>
            <person name="Staben C."/>
            <person name="Marcotte E."/>
            <person name="Greenberg D."/>
            <person name="Roy A."/>
            <person name="Foley K."/>
            <person name="Naylor J."/>
            <person name="Stange-Thomann N."/>
            <person name="Barrett R."/>
            <person name="Gnerre S."/>
            <person name="Kamal M."/>
            <person name="Kamvysselis M."/>
            <person name="Mauceli E.W."/>
            <person name="Bielke C."/>
            <person name="Rudd S."/>
            <person name="Frishman D."/>
            <person name="Krystofova S."/>
            <person name="Rasmussen C."/>
            <person name="Metzenberg R.L."/>
            <person name="Perkins D.D."/>
            <person name="Kroken S."/>
            <person name="Cogoni C."/>
            <person name="Macino G."/>
            <person name="Catcheside D.E.A."/>
            <person name="Li W."/>
            <person name="Pratt R.J."/>
            <person name="Osmani S.A."/>
            <person name="DeSouza C.P.C."/>
            <person name="Glass N.L."/>
            <person name="Orbach M.J."/>
            <person name="Berglund J.A."/>
            <person name="Voelker R."/>
            <person name="Yarden O."/>
            <person name="Plamann M."/>
            <person name="Seiler S."/>
            <person name="Dunlap J.C."/>
            <person name="Radford A."/>
            <person name="Aramayo R."/>
            <person name="Natvig D.O."/>
            <person name="Alex L.A."/>
            <person name="Mannhaupt G."/>
            <person name="Ebbole D.J."/>
            <person name="Freitag M."/>
            <person name="Paulsen I."/>
            <person name="Sachs M.S."/>
            <person name="Lander E.S."/>
            <person name="Nusbaum C."/>
            <person name="Birren B.W."/>
        </authorList>
    </citation>
    <scope>NUCLEOTIDE SEQUENCE [LARGE SCALE GENOMIC DNA]</scope>
    <source>
        <strain>ATCC 24698 / 74-OR23-1A / CBS 708.71 / DSM 1257 / FGSC 987</strain>
    </source>
</reference>
<feature type="chain" id="PRO_0000399642" description="Respiratory supercomplex factor 1, mitochondrial">
    <location>
        <begin position="1"/>
        <end position="221"/>
    </location>
</feature>
<feature type="transmembrane region" description="Helical" evidence="3">
    <location>
        <begin position="46"/>
        <end position="68"/>
    </location>
</feature>
<feature type="transmembrane region" description="Helical" evidence="3">
    <location>
        <begin position="83"/>
        <end position="102"/>
    </location>
</feature>
<feature type="domain" description="HIG1" evidence="3">
    <location>
        <begin position="20"/>
        <end position="111"/>
    </location>
</feature>
<feature type="region of interest" description="Disordered" evidence="4">
    <location>
        <begin position="1"/>
        <end position="29"/>
    </location>
</feature>
<feature type="region of interest" description="Disordered" evidence="4">
    <location>
        <begin position="144"/>
        <end position="221"/>
    </location>
</feature>
<feature type="coiled-coil region" evidence="2">
    <location>
        <begin position="112"/>
        <end position="151"/>
    </location>
</feature>
<feature type="compositionally biased region" description="Low complexity" evidence="4">
    <location>
        <begin position="9"/>
        <end position="23"/>
    </location>
</feature>
<feature type="compositionally biased region" description="Low complexity" evidence="4">
    <location>
        <begin position="157"/>
        <end position="173"/>
    </location>
</feature>
<keyword id="KW-0175">Coiled coil</keyword>
<keyword id="KW-0472">Membrane</keyword>
<keyword id="KW-0496">Mitochondrion</keyword>
<keyword id="KW-1185">Reference proteome</keyword>
<keyword id="KW-0812">Transmembrane</keyword>
<keyword id="KW-1133">Transmembrane helix</keyword>
<protein>
    <recommendedName>
        <fullName>Respiratory supercomplex factor 1, mitochondrial</fullName>
    </recommendedName>
</protein>
<gene>
    <name type="primary">rcf1</name>
    <name type="ORF">NCU02451</name>
</gene>
<proteinExistence type="inferred from homology"/>
<accession>Q7S455</accession>
<sequence>MPNSTDNQGSAPPGLSSRPLPSSFDDNADFYNENGFQKVSRRLREEPLIPIGCIATVAAFTGAYRAMRRGDHEQVQRMFRARVAAQAFTVVAMVAGSWYYAADRQKQKELWKLKEQQDAEEKRQKWIRELEVRDAEDKALQERLEKRRKKKAERDSAAGAPDGVAAQAQAAYADAKEKVSSPAGDVAPEDPNKSNITGVRERLPTWLGGSKGADGSSRDKN</sequence>